<feature type="chain" id="PRO_0000210301" description="Mitochondrial import inner membrane translocase subunit TIM22">
    <location>
        <begin position="1"/>
        <end position="207"/>
    </location>
</feature>
<feature type="topological domain" description="Mitochondrial intermembrane" evidence="8">
    <location>
        <begin position="1"/>
        <end position="46"/>
    </location>
</feature>
<feature type="transmembrane region" description="Helical" evidence="1">
    <location>
        <begin position="47"/>
        <end position="67"/>
    </location>
</feature>
<feature type="transmembrane region" description="Helical" evidence="1">
    <location>
        <begin position="152"/>
        <end position="172"/>
    </location>
</feature>
<feature type="transmembrane region" description="Helical" evidence="1">
    <location>
        <begin position="173"/>
        <end position="193"/>
    </location>
</feature>
<feature type="topological domain" description="Mitochondrial intermembrane" evidence="8">
    <location>
        <begin position="194"/>
        <end position="207"/>
    </location>
</feature>
<feature type="disulfide bond" evidence="8">
    <location>
        <begin position="42"/>
        <end position="141"/>
    </location>
</feature>
<comment type="function">
    <text evidence="4 5 6">Essential core component of the TIM22 complex, a complex that mediates the import and insertion of multi-pass transmembrane proteins, such as mitochondrial carrier family members, into the mitochondrial inner membrane. In the TIM22 complex, it constitutes the voltage-activated and signal-gated channel. Forms a twin-pore translocase that uses the membrane potential as external driving force in 2 voltage-dependent steps. Mediates the insertion of precursor proteins in a 3 step process. After the precursor is tethered to the translocase without losing energy from the Delta(psi), 2 energy-requiring steps are needed. First, Delta(psi) acts on the precursor protein and promotes its docking in the translocase complex. Then, Delta(psi) and an internal signal peptide together induce rapid gating transitions in one pore and closing of the other pore and drive membrane insertion to completion.</text>
</comment>
<comment type="subunit">
    <text evidence="3 5">Component of the TIM22 complex, whose core is composed of TIM18, TIM22 and TIM54, associated with the peripheral proteins MRS5/TIM12 and the 70 kDa heterohexamer composed of TIM9 and TIM10 (or TIM8 and TIM13).</text>
</comment>
<comment type="interaction">
    <interactant intactId="EBI-9132">
        <id>Q12328</id>
    </interactant>
    <interactant intactId="EBI-23128">
        <id>P53220</id>
        <label>TIM21</label>
    </interactant>
    <organismsDiffer>false</organismsDiffer>
    <experiments>2</experiments>
</comment>
<comment type="subcellular location">
    <subcellularLocation>
        <location evidence="2 6 8">Mitochondrion inner membrane</location>
        <topology evidence="2 6">Multi-pass membrane protein</topology>
    </subcellularLocation>
    <text>Import into inner membrane protein requires TOM20 function.</text>
</comment>
<comment type="similarity">
    <text evidence="7">Belongs to the Tim17/Tim22/Tim23 family.</text>
</comment>
<protein>
    <recommendedName>
        <fullName>Mitochondrial import inner membrane translocase subunit TIM22</fullName>
    </recommendedName>
</protein>
<organism>
    <name type="scientific">Saccharomyces cerevisiae (strain ATCC 204508 / S288c)</name>
    <name type="common">Baker's yeast</name>
    <dbReference type="NCBI Taxonomy" id="559292"/>
    <lineage>
        <taxon>Eukaryota</taxon>
        <taxon>Fungi</taxon>
        <taxon>Dikarya</taxon>
        <taxon>Ascomycota</taxon>
        <taxon>Saccharomycotina</taxon>
        <taxon>Saccharomycetes</taxon>
        <taxon>Saccharomycetales</taxon>
        <taxon>Saccharomycetaceae</taxon>
        <taxon>Saccharomyces</taxon>
    </lineage>
</organism>
<proteinExistence type="evidence at protein level"/>
<accession>Q12328</accession>
<accession>D6VRD7</accession>
<reference key="1">
    <citation type="journal article" date="1997" name="Yeast">
        <title>The nucleotide sequence of a 39 kb segment of yeast chromosome IV: 12 new open reading frames, nine known genes and one gene for Gly-tRNA.</title>
        <authorList>
            <person name="Bahr A."/>
            <person name="Moeller-Rieker S."/>
            <person name="Hankeln T."/>
            <person name="Kraemer C."/>
            <person name="Protin U."/>
            <person name="Schmidt E.R."/>
        </authorList>
    </citation>
    <scope>NUCLEOTIDE SEQUENCE [GENOMIC DNA]</scope>
    <source>
        <strain>ATCC 96604 / S288c / FY1679</strain>
    </source>
</reference>
<reference key="2">
    <citation type="journal article" date="1997" name="Nature">
        <title>The nucleotide sequence of Saccharomyces cerevisiae chromosome IV.</title>
        <authorList>
            <person name="Jacq C."/>
            <person name="Alt-Moerbe J."/>
            <person name="Andre B."/>
            <person name="Arnold W."/>
            <person name="Bahr A."/>
            <person name="Ballesta J.P.G."/>
            <person name="Bargues M."/>
            <person name="Baron L."/>
            <person name="Becker A."/>
            <person name="Biteau N."/>
            <person name="Bloecker H."/>
            <person name="Blugeon C."/>
            <person name="Boskovic J."/>
            <person name="Brandt P."/>
            <person name="Brueckner M."/>
            <person name="Buitrago M.J."/>
            <person name="Coster F."/>
            <person name="Delaveau T."/>
            <person name="del Rey F."/>
            <person name="Dujon B."/>
            <person name="Eide L.G."/>
            <person name="Garcia-Cantalejo J.M."/>
            <person name="Goffeau A."/>
            <person name="Gomez-Peris A."/>
            <person name="Granotier C."/>
            <person name="Hanemann V."/>
            <person name="Hankeln T."/>
            <person name="Hoheisel J.D."/>
            <person name="Jaeger W."/>
            <person name="Jimenez A."/>
            <person name="Jonniaux J.-L."/>
            <person name="Kraemer C."/>
            <person name="Kuester H."/>
            <person name="Laamanen P."/>
            <person name="Legros Y."/>
            <person name="Louis E.J."/>
            <person name="Moeller-Rieker S."/>
            <person name="Monnet A."/>
            <person name="Moro M."/>
            <person name="Mueller-Auer S."/>
            <person name="Nussbaumer B."/>
            <person name="Paricio N."/>
            <person name="Paulin L."/>
            <person name="Perea J."/>
            <person name="Perez-Alonso M."/>
            <person name="Perez-Ortin J.E."/>
            <person name="Pohl T.M."/>
            <person name="Prydz H."/>
            <person name="Purnelle B."/>
            <person name="Rasmussen S.W."/>
            <person name="Remacha M.A."/>
            <person name="Revuelta J.L."/>
            <person name="Rieger M."/>
            <person name="Salom D."/>
            <person name="Saluz H.P."/>
            <person name="Saiz J.E."/>
            <person name="Saren A.-M."/>
            <person name="Schaefer M."/>
            <person name="Scharfe M."/>
            <person name="Schmidt E.R."/>
            <person name="Schneider C."/>
            <person name="Scholler P."/>
            <person name="Schwarz S."/>
            <person name="Soler-Mira A."/>
            <person name="Urrestarazu L.A."/>
            <person name="Verhasselt P."/>
            <person name="Vissers S."/>
            <person name="Voet M."/>
            <person name="Volckaert G."/>
            <person name="Wagner G."/>
            <person name="Wambutt R."/>
            <person name="Wedler E."/>
            <person name="Wedler H."/>
            <person name="Woelfl S."/>
            <person name="Harris D.E."/>
            <person name="Bowman S."/>
            <person name="Brown D."/>
            <person name="Churcher C.M."/>
            <person name="Connor R."/>
            <person name="Dedman K."/>
            <person name="Gentles S."/>
            <person name="Hamlin N."/>
            <person name="Hunt S."/>
            <person name="Jones L."/>
            <person name="McDonald S."/>
            <person name="Murphy L.D."/>
            <person name="Niblett D."/>
            <person name="Odell C."/>
            <person name="Oliver K."/>
            <person name="Rajandream M.A."/>
            <person name="Richards C."/>
            <person name="Shore L."/>
            <person name="Walsh S.V."/>
            <person name="Barrell B.G."/>
            <person name="Dietrich F.S."/>
            <person name="Mulligan J.T."/>
            <person name="Allen E."/>
            <person name="Araujo R."/>
            <person name="Aviles E."/>
            <person name="Berno A."/>
            <person name="Carpenter J."/>
            <person name="Chen E."/>
            <person name="Cherry J.M."/>
            <person name="Chung E."/>
            <person name="Duncan M."/>
            <person name="Hunicke-Smith S."/>
            <person name="Hyman R.W."/>
            <person name="Komp C."/>
            <person name="Lashkari D."/>
            <person name="Lew H."/>
            <person name="Lin D."/>
            <person name="Mosedale D."/>
            <person name="Nakahara K."/>
            <person name="Namath A."/>
            <person name="Oefner P."/>
            <person name="Oh C."/>
            <person name="Petel F.X."/>
            <person name="Roberts D."/>
            <person name="Schramm S."/>
            <person name="Schroeder M."/>
            <person name="Shogren T."/>
            <person name="Shroff N."/>
            <person name="Winant A."/>
            <person name="Yelton M.A."/>
            <person name="Botstein D."/>
            <person name="Davis R.W."/>
            <person name="Johnston M."/>
            <person name="Andrews S."/>
            <person name="Brinkman R."/>
            <person name="Cooper J."/>
            <person name="Ding H."/>
            <person name="Du Z."/>
            <person name="Favello A."/>
            <person name="Fulton L."/>
            <person name="Gattung S."/>
            <person name="Greco T."/>
            <person name="Hallsworth K."/>
            <person name="Hawkins J."/>
            <person name="Hillier L.W."/>
            <person name="Jier M."/>
            <person name="Johnson D."/>
            <person name="Johnston L."/>
            <person name="Kirsten J."/>
            <person name="Kucaba T."/>
            <person name="Langston Y."/>
            <person name="Latreille P."/>
            <person name="Le T."/>
            <person name="Mardis E."/>
            <person name="Menezes S."/>
            <person name="Miller N."/>
            <person name="Nhan M."/>
            <person name="Pauley A."/>
            <person name="Peluso D."/>
            <person name="Rifkin L."/>
            <person name="Riles L."/>
            <person name="Taich A."/>
            <person name="Trevaskis E."/>
            <person name="Vignati D."/>
            <person name="Wilcox L."/>
            <person name="Wohldman P."/>
            <person name="Vaudin M."/>
            <person name="Wilson R."/>
            <person name="Waterston R."/>
            <person name="Albermann K."/>
            <person name="Hani J."/>
            <person name="Heumann K."/>
            <person name="Kleine K."/>
            <person name="Mewes H.-W."/>
            <person name="Zollner A."/>
            <person name="Zaccaria P."/>
        </authorList>
    </citation>
    <scope>NUCLEOTIDE SEQUENCE [LARGE SCALE GENOMIC DNA]</scope>
    <source>
        <strain>ATCC 204508 / S288c</strain>
    </source>
</reference>
<reference key="3">
    <citation type="journal article" date="2014" name="G3 (Bethesda)">
        <title>The reference genome sequence of Saccharomyces cerevisiae: Then and now.</title>
        <authorList>
            <person name="Engel S.R."/>
            <person name="Dietrich F.S."/>
            <person name="Fisk D.G."/>
            <person name="Binkley G."/>
            <person name="Balakrishnan R."/>
            <person name="Costanzo M.C."/>
            <person name="Dwight S.S."/>
            <person name="Hitz B.C."/>
            <person name="Karra K."/>
            <person name="Nash R.S."/>
            <person name="Weng S."/>
            <person name="Wong E.D."/>
            <person name="Lloyd P."/>
            <person name="Skrzypek M.S."/>
            <person name="Miyasato S.R."/>
            <person name="Simison M."/>
            <person name="Cherry J.M."/>
        </authorList>
    </citation>
    <scope>GENOME REANNOTATION</scope>
    <source>
        <strain>ATCC 204508 / S288c</strain>
    </source>
</reference>
<reference key="4">
    <citation type="journal article" date="2007" name="Genome Res.">
        <title>Approaching a complete repository of sequence-verified protein-encoding clones for Saccharomyces cerevisiae.</title>
        <authorList>
            <person name="Hu Y."/>
            <person name="Rolfs A."/>
            <person name="Bhullar B."/>
            <person name="Murthy T.V.S."/>
            <person name="Zhu C."/>
            <person name="Berger M.F."/>
            <person name="Camargo A.A."/>
            <person name="Kelley F."/>
            <person name="McCarron S."/>
            <person name="Jepson D."/>
            <person name="Richardson A."/>
            <person name="Raphael J."/>
            <person name="Moreira D."/>
            <person name="Taycher E."/>
            <person name="Zuo D."/>
            <person name="Mohr S."/>
            <person name="Kane M.F."/>
            <person name="Williamson J."/>
            <person name="Simpson A.J.G."/>
            <person name="Bulyk M.L."/>
            <person name="Harlow E."/>
            <person name="Marsischky G."/>
            <person name="Kolodner R.D."/>
            <person name="LaBaer J."/>
        </authorList>
    </citation>
    <scope>NUCLEOTIDE SEQUENCE [GENOMIC DNA]</scope>
    <source>
        <strain>ATCC 204508 / S288c</strain>
    </source>
</reference>
<reference key="5">
    <citation type="journal article" date="1996" name="Nature">
        <title>Import of carrier proteins into the mitochondrial inner membrane mediated by Tim22.</title>
        <authorList>
            <person name="Sirrenberg C."/>
            <person name="Bauer M.D."/>
            <person name="Guiard B."/>
            <person name="Neupert W."/>
            <person name="Brunner M."/>
        </authorList>
    </citation>
    <scope>FUNCTION</scope>
    <scope>SUBCELLULAR LOCATION</scope>
    <scope>INTERACTION WITH TIM10 AND TIM12</scope>
</reference>
<reference key="6">
    <citation type="journal article" date="1998" name="Nature">
        <title>Carrier protein import into mitochondria mediated by the intermembrane proteins Tim10/Mrs11 and Tim12/Mrs5.</title>
        <authorList>
            <person name="Sirrenberg C."/>
            <person name="Endres M."/>
            <person name="Foelsch H."/>
            <person name="Stuart R.A."/>
            <person name="Neupert W."/>
            <person name="Brunner M."/>
        </authorList>
    </citation>
    <scope>INTERACTION WITH TIM10 AND TIM12</scope>
</reference>
<reference key="7">
    <citation type="journal article" date="1998" name="Science">
        <title>Import of mitochondrial carriers mediated by essential proteins of the intermembrane space.</title>
        <authorList>
            <person name="Koehler C.M."/>
            <person name="Jarosch E."/>
            <person name="Tokatlidis K."/>
            <person name="Schmid K."/>
            <person name="Schweyen R.J."/>
            <person name="Schatz G."/>
        </authorList>
    </citation>
    <scope>INTERACTION WITH TIM10 AND TIM12</scope>
</reference>
<reference key="8">
    <citation type="journal article" date="1999" name="Mol. Biol. Cell">
        <title>Biogenesis of Tim proteins of the mitochondrial carrier import pathway: differential targeting mechanisms and crossing over with the main import pathway.</title>
        <authorList>
            <person name="Kurz M."/>
            <person name="Martin H."/>
            <person name="Rassow J."/>
            <person name="Pfanner N."/>
            <person name="Ryan M.T."/>
        </authorList>
    </citation>
    <scope>SUBCELLULAR LOCATION</scope>
</reference>
<reference key="9">
    <citation type="journal article" date="2000" name="Mol. Cell. Biol.">
        <title>Tim18p, a new subunit of the TIM22 complex that mediates insertion of imported proteins into the yeast mitochondrial inner membrane.</title>
        <authorList>
            <person name="Koehler C.M."/>
            <person name="Murphy M.P."/>
            <person name="Bally N.A."/>
            <person name="Leuenberger D."/>
            <person name="Oppliger W."/>
            <person name="Dolfini L."/>
            <person name="Junne T."/>
            <person name="Schatz G."/>
            <person name="Or E."/>
        </authorList>
    </citation>
    <scope>IDENTIFICATION IN A THE TIM22 COMPLEX WITH TIM12; TIM18 AND TIM54</scope>
</reference>
<reference key="10">
    <citation type="journal article" date="2002" name="Mol. Cell">
        <title>Tim22, the essential core of the mitochondrial protein insertion complex, forms a voltage-activated and signal-gated channel.</title>
        <authorList>
            <person name="Kovermann P."/>
            <person name="Truscott K.N."/>
            <person name="Guiard B."/>
            <person name="Rehling P."/>
            <person name="Sepuri N.B."/>
            <person name="Mueller H."/>
            <person name="Jensen R.E."/>
            <person name="Wagner R."/>
            <person name="Pfanner N."/>
        </authorList>
    </citation>
    <scope>FUNCTION</scope>
</reference>
<reference key="11">
    <citation type="journal article" date="2003" name="Science">
        <title>Protein insertion into the mitochondrial inner membrane by a twin-pore translocase.</title>
        <authorList>
            <person name="Rehling P."/>
            <person name="Model K."/>
            <person name="Brandner K."/>
            <person name="Kovermann P."/>
            <person name="Sickmann A."/>
            <person name="Meyer H.E."/>
            <person name="Kuehlbrandt W."/>
            <person name="Wagner R."/>
            <person name="Truscott K.N."/>
            <person name="Pfanner N."/>
        </authorList>
    </citation>
    <scope>FUNCTION</scope>
    <scope>IDENTIFICATION IN THE TIM22 COMPLEX WITH TIM10; TIM12; TIM18 AND TIM54</scope>
</reference>
<reference key="12">
    <citation type="journal article" date="2003" name="Science">
        <authorList>
            <person name="Rehling P."/>
            <person name="Model K."/>
            <person name="Brandner K."/>
            <person name="Kovermann P."/>
            <person name="Sickmann A."/>
            <person name="Meyer H.E."/>
            <person name="Kuehlbrandt W."/>
            <person name="Wagner R."/>
            <person name="Truscott K.N."/>
            <person name="Pfanner N."/>
        </authorList>
    </citation>
    <scope>ERRATUM OF PUBMED:12637749</scope>
</reference>
<reference key="13">
    <citation type="journal article" date="2016" name="Sci. Rep.">
        <title>The presence of disulfide bonds reveals an evolutionarily conserved mechanism involved in mitochondrial protein translocase assembly.</title>
        <authorList>
            <person name="Wrobel L."/>
            <person name="Sokol A.M."/>
            <person name="Chojnacka M."/>
            <person name="Chacinska A."/>
        </authorList>
    </citation>
    <scope>DISULFIDE BOND</scope>
    <scope>SUBCELLULAR LOCATION</scope>
    <scope>TOPOLOGY</scope>
</reference>
<evidence type="ECO:0000255" key="1"/>
<evidence type="ECO:0000269" key="2">
    <source>
    </source>
</evidence>
<evidence type="ECO:0000269" key="3">
    <source>
    </source>
</evidence>
<evidence type="ECO:0000269" key="4">
    <source>
    </source>
</evidence>
<evidence type="ECO:0000269" key="5">
    <source>
    </source>
</evidence>
<evidence type="ECO:0000269" key="6">
    <source>
    </source>
</evidence>
<evidence type="ECO:0000305" key="7"/>
<evidence type="ECO:0000305" key="8">
    <source>
    </source>
</evidence>
<dbReference type="EMBL" id="X99000">
    <property type="protein sequence ID" value="CAA67473.1"/>
    <property type="molecule type" value="Genomic_DNA"/>
</dbReference>
<dbReference type="EMBL" id="Z74265">
    <property type="protein sequence ID" value="CAA98795.1"/>
    <property type="molecule type" value="Genomic_DNA"/>
</dbReference>
<dbReference type="EMBL" id="AY558171">
    <property type="protein sequence ID" value="AAS56497.1"/>
    <property type="molecule type" value="Genomic_DNA"/>
</dbReference>
<dbReference type="EMBL" id="BK006938">
    <property type="protein sequence ID" value="DAA11647.1"/>
    <property type="molecule type" value="Genomic_DNA"/>
</dbReference>
<dbReference type="PIR" id="S67776">
    <property type="entry name" value="S67776"/>
</dbReference>
<dbReference type="RefSeq" id="NP_010064.1">
    <property type="nucleotide sequence ID" value="NM_001180277.1"/>
</dbReference>
<dbReference type="PDB" id="6LO8">
    <property type="method" value="EM"/>
    <property type="resolution" value="3.83 A"/>
    <property type="chains" value="A=1-206"/>
</dbReference>
<dbReference type="PDBsum" id="6LO8"/>
<dbReference type="EMDB" id="EMD-0935"/>
<dbReference type="SMR" id="Q12328"/>
<dbReference type="BioGRID" id="31828">
    <property type="interactions" value="583"/>
</dbReference>
<dbReference type="ComplexPortal" id="CPX-1629">
    <property type="entry name" value="TIM22 mitochondrial inner membrane twin-pore carrier translocase complex"/>
</dbReference>
<dbReference type="DIP" id="DIP-1142N"/>
<dbReference type="FunCoup" id="Q12328">
    <property type="interactions" value="764"/>
</dbReference>
<dbReference type="IntAct" id="Q12328">
    <property type="interactions" value="6"/>
</dbReference>
<dbReference type="MINT" id="Q12328"/>
<dbReference type="STRING" id="4932.YDL217C"/>
<dbReference type="TCDB" id="3.A.8.1.1">
    <property type="family name" value="the mitochondrial protein translocase (mpt) family"/>
</dbReference>
<dbReference type="GlyGen" id="Q12328">
    <property type="glycosylation" value="1 site"/>
</dbReference>
<dbReference type="PaxDb" id="4932-YDL217C"/>
<dbReference type="PeptideAtlas" id="Q12328"/>
<dbReference type="EnsemblFungi" id="YDL217C_mRNA">
    <property type="protein sequence ID" value="YDL217C"/>
    <property type="gene ID" value="YDL217C"/>
</dbReference>
<dbReference type="GeneID" id="851309"/>
<dbReference type="KEGG" id="sce:YDL217C"/>
<dbReference type="AGR" id="SGD:S000002376"/>
<dbReference type="SGD" id="S000002376">
    <property type="gene designation" value="TIM22"/>
</dbReference>
<dbReference type="VEuPathDB" id="FungiDB:YDL217C"/>
<dbReference type="eggNOG" id="KOG3225">
    <property type="taxonomic scope" value="Eukaryota"/>
</dbReference>
<dbReference type="GeneTree" id="ENSGT00390000016067"/>
<dbReference type="HOGENOM" id="CLU_091077_1_0_1"/>
<dbReference type="InParanoid" id="Q12328"/>
<dbReference type="OMA" id="VNPNMAD"/>
<dbReference type="OrthoDB" id="75343at2759"/>
<dbReference type="BioCyc" id="YEAST:G3O-29598-MONOMER"/>
<dbReference type="Reactome" id="R-SCE-1268020">
    <property type="pathway name" value="Mitochondrial protein import"/>
</dbReference>
<dbReference type="BioGRID-ORCS" id="851309">
    <property type="hits" value="5 hits in 10 CRISPR screens"/>
</dbReference>
<dbReference type="PRO" id="PR:Q12328"/>
<dbReference type="Proteomes" id="UP000002311">
    <property type="component" value="Chromosome IV"/>
</dbReference>
<dbReference type="RNAct" id="Q12328">
    <property type="molecule type" value="protein"/>
</dbReference>
<dbReference type="GO" id="GO:0005829">
    <property type="term" value="C:cytosol"/>
    <property type="evidence" value="ECO:0000304"/>
    <property type="project" value="Reactome"/>
</dbReference>
<dbReference type="GO" id="GO:0005743">
    <property type="term" value="C:mitochondrial inner membrane"/>
    <property type="evidence" value="ECO:0000314"/>
    <property type="project" value="ComplexPortal"/>
</dbReference>
<dbReference type="GO" id="GO:0005758">
    <property type="term" value="C:mitochondrial intermembrane space"/>
    <property type="evidence" value="ECO:0000304"/>
    <property type="project" value="Reactome"/>
</dbReference>
<dbReference type="GO" id="GO:0005739">
    <property type="term" value="C:mitochondrion"/>
    <property type="evidence" value="ECO:0007005"/>
    <property type="project" value="SGD"/>
</dbReference>
<dbReference type="GO" id="GO:0042721">
    <property type="term" value="C:TIM22 mitochondrial import inner membrane insertion complex"/>
    <property type="evidence" value="ECO:0000314"/>
    <property type="project" value="SGD"/>
</dbReference>
<dbReference type="GO" id="GO:0030943">
    <property type="term" value="F:mitochondrion targeting sequence binding"/>
    <property type="evidence" value="ECO:0000314"/>
    <property type="project" value="SGD"/>
</dbReference>
<dbReference type="GO" id="GO:0008320">
    <property type="term" value="F:protein transmembrane transporter activity"/>
    <property type="evidence" value="ECO:0000314"/>
    <property type="project" value="SGD"/>
</dbReference>
<dbReference type="GO" id="GO:0005198">
    <property type="term" value="F:structural molecule activity"/>
    <property type="evidence" value="ECO:0000314"/>
    <property type="project" value="SGD"/>
</dbReference>
<dbReference type="GO" id="GO:0045039">
    <property type="term" value="P:protein insertion into mitochondrial inner membrane"/>
    <property type="evidence" value="ECO:0000314"/>
    <property type="project" value="ComplexPortal"/>
</dbReference>
<dbReference type="InterPro" id="IPR039175">
    <property type="entry name" value="TIM22"/>
</dbReference>
<dbReference type="PANTHER" id="PTHR14110">
    <property type="entry name" value="MITOCHONDRIAL IMPORT INNER MEMBRANE TRANSLOCASE SUBUNIT TIM22"/>
    <property type="match status" value="1"/>
</dbReference>
<dbReference type="PANTHER" id="PTHR14110:SF0">
    <property type="entry name" value="MITOCHONDRIAL IMPORT INNER MEMBRANE TRANSLOCASE SUBUNIT TIM22"/>
    <property type="match status" value="1"/>
</dbReference>
<dbReference type="Pfam" id="PF02466">
    <property type="entry name" value="Tim17"/>
    <property type="match status" value="1"/>
</dbReference>
<gene>
    <name type="primary">TIM22</name>
    <name type="ordered locus">YDL217C</name>
    <name type="ORF">D0884</name>
</gene>
<name>TIM22_YEAST</name>
<sequence>MVYTGFGLEQISPAQKKPYNELTPEEQGERGAEMIMNFMTSCPGKSVVSGVTGFALGGVLGLFMASMAYDTPLHTPTPANTAATATAGNIGVGGISRTVQQISDLPFRQQMKLQFTDMGKKSYSSAKNFGYIGMIYAGVECVIESLRAKNDIYNGVTAGFFTGAGLAYKAGPQAALMGGAGFAAFSAAIDLYMKSEDGRPPQNDFKE</sequence>
<keyword id="KW-0002">3D-structure</keyword>
<keyword id="KW-1015">Disulfide bond</keyword>
<keyword id="KW-0472">Membrane</keyword>
<keyword id="KW-0496">Mitochondrion</keyword>
<keyword id="KW-0999">Mitochondrion inner membrane</keyword>
<keyword id="KW-0653">Protein transport</keyword>
<keyword id="KW-1185">Reference proteome</keyword>
<keyword id="KW-0811">Translocation</keyword>
<keyword id="KW-0812">Transmembrane</keyword>
<keyword id="KW-1133">Transmembrane helix</keyword>
<keyword id="KW-0813">Transport</keyword>